<keyword id="KW-0456">Lyase</keyword>
<keyword id="KW-0501">Molybdenum cofactor biosynthesis</keyword>
<organism>
    <name type="scientific">Pseudomonas paraeruginosa (strain DSM 24068 / PA7)</name>
    <name type="common">Pseudomonas aeruginosa (strain PA7)</name>
    <dbReference type="NCBI Taxonomy" id="381754"/>
    <lineage>
        <taxon>Bacteria</taxon>
        <taxon>Pseudomonadati</taxon>
        <taxon>Pseudomonadota</taxon>
        <taxon>Gammaproteobacteria</taxon>
        <taxon>Pseudomonadales</taxon>
        <taxon>Pseudomonadaceae</taxon>
        <taxon>Pseudomonas</taxon>
        <taxon>Pseudomonas paraeruginosa</taxon>
    </lineage>
</organism>
<dbReference type="EC" id="4.6.1.17" evidence="1"/>
<dbReference type="EMBL" id="CP000744">
    <property type="protein sequence ID" value="ABR82318.1"/>
    <property type="molecule type" value="Genomic_DNA"/>
</dbReference>
<dbReference type="RefSeq" id="WP_012074481.1">
    <property type="nucleotide sequence ID" value="NC_009656.1"/>
</dbReference>
<dbReference type="SMR" id="A6V0J0"/>
<dbReference type="KEGG" id="pap:PSPA7_1190"/>
<dbReference type="HOGENOM" id="CLU_074693_1_1_6"/>
<dbReference type="UniPathway" id="UPA00344"/>
<dbReference type="Proteomes" id="UP000001582">
    <property type="component" value="Chromosome"/>
</dbReference>
<dbReference type="GO" id="GO:0061799">
    <property type="term" value="F:cyclic pyranopterin monophosphate synthase activity"/>
    <property type="evidence" value="ECO:0007669"/>
    <property type="project" value="UniProtKB-UniRule"/>
</dbReference>
<dbReference type="GO" id="GO:0006777">
    <property type="term" value="P:Mo-molybdopterin cofactor biosynthetic process"/>
    <property type="evidence" value="ECO:0007669"/>
    <property type="project" value="UniProtKB-UniRule"/>
</dbReference>
<dbReference type="CDD" id="cd01420">
    <property type="entry name" value="MoaC_PE"/>
    <property type="match status" value="1"/>
</dbReference>
<dbReference type="FunFam" id="3.30.70.640:FF:000001">
    <property type="entry name" value="Cyclic pyranopterin monophosphate synthase"/>
    <property type="match status" value="1"/>
</dbReference>
<dbReference type="Gene3D" id="3.30.70.640">
    <property type="entry name" value="Molybdopterin cofactor biosynthesis C (MoaC) domain"/>
    <property type="match status" value="1"/>
</dbReference>
<dbReference type="HAMAP" id="MF_01224_B">
    <property type="entry name" value="MoaC_B"/>
    <property type="match status" value="1"/>
</dbReference>
<dbReference type="InterPro" id="IPR023045">
    <property type="entry name" value="MoaC"/>
</dbReference>
<dbReference type="InterPro" id="IPR047594">
    <property type="entry name" value="MoaC_bact/euk"/>
</dbReference>
<dbReference type="InterPro" id="IPR036522">
    <property type="entry name" value="MoaC_sf"/>
</dbReference>
<dbReference type="InterPro" id="IPR050105">
    <property type="entry name" value="MoCo_biosynth_MoaA/MoaC"/>
</dbReference>
<dbReference type="InterPro" id="IPR002820">
    <property type="entry name" value="Mopterin_CF_biosynth-C_dom"/>
</dbReference>
<dbReference type="NCBIfam" id="TIGR00581">
    <property type="entry name" value="moaC"/>
    <property type="match status" value="1"/>
</dbReference>
<dbReference type="NCBIfam" id="NF006870">
    <property type="entry name" value="PRK09364.1"/>
    <property type="match status" value="1"/>
</dbReference>
<dbReference type="PANTHER" id="PTHR22960:SF29">
    <property type="entry name" value="CYCLIC PYRANOPTERIN MONOPHOSPHATE SYNTHASE"/>
    <property type="match status" value="1"/>
</dbReference>
<dbReference type="PANTHER" id="PTHR22960">
    <property type="entry name" value="MOLYBDOPTERIN COFACTOR SYNTHESIS PROTEIN A"/>
    <property type="match status" value="1"/>
</dbReference>
<dbReference type="Pfam" id="PF01967">
    <property type="entry name" value="MoaC"/>
    <property type="match status" value="1"/>
</dbReference>
<dbReference type="SUPFAM" id="SSF55040">
    <property type="entry name" value="Molybdenum cofactor biosynthesis protein C, MoaC"/>
    <property type="match status" value="1"/>
</dbReference>
<comment type="function">
    <text evidence="1">Catalyzes the conversion of (8S)-3',8-cyclo-7,8-dihydroguanosine 5'-triphosphate to cyclic pyranopterin monophosphate (cPMP).</text>
</comment>
<comment type="catalytic activity">
    <reaction evidence="1">
        <text>(8S)-3',8-cyclo-7,8-dihydroguanosine 5'-triphosphate = cyclic pyranopterin phosphate + diphosphate</text>
        <dbReference type="Rhea" id="RHEA:49580"/>
        <dbReference type="ChEBI" id="CHEBI:33019"/>
        <dbReference type="ChEBI" id="CHEBI:59648"/>
        <dbReference type="ChEBI" id="CHEBI:131766"/>
        <dbReference type="EC" id="4.6.1.17"/>
    </reaction>
</comment>
<comment type="pathway">
    <text evidence="1">Cofactor biosynthesis; molybdopterin biosynthesis.</text>
</comment>
<comment type="subunit">
    <text evidence="1">Homohexamer; trimer of dimers.</text>
</comment>
<comment type="similarity">
    <text evidence="1">Belongs to the MoaC family.</text>
</comment>
<feature type="chain" id="PRO_1000054118" description="Cyclic pyranopterin monophosphate synthase">
    <location>
        <begin position="1"/>
        <end position="160"/>
    </location>
</feature>
<feature type="active site" evidence="1">
    <location>
        <position position="125"/>
    </location>
</feature>
<feature type="binding site" evidence="1">
    <location>
        <begin position="73"/>
        <end position="75"/>
    </location>
    <ligand>
        <name>substrate</name>
    </ligand>
</feature>
<feature type="binding site" evidence="1">
    <location>
        <begin position="110"/>
        <end position="111"/>
    </location>
    <ligand>
        <name>substrate</name>
    </ligand>
</feature>
<sequence length="160" mass="17338">MLTHLDSQGRANMVDVTEKAVTSREATAEAVVRMRPETLQLIQDGGHPKGDVFAVARIAGIQAAKRTHELIPLCHPLLLTSVKVELQAEAPDAVRIRARCRLAGQTGVEMEALTAASVAALTIYDMCKAVDRGMLIEQVQLLEKLGGKSGHYRKEEEGQA</sequence>
<reference key="1">
    <citation type="submission" date="2007-06" db="EMBL/GenBank/DDBJ databases">
        <authorList>
            <person name="Dodson R.J."/>
            <person name="Harkins D."/>
            <person name="Paulsen I.T."/>
        </authorList>
    </citation>
    <scope>NUCLEOTIDE SEQUENCE [LARGE SCALE GENOMIC DNA]</scope>
    <source>
        <strain>DSM 24068 / PA7</strain>
    </source>
</reference>
<accession>A6V0J0</accession>
<proteinExistence type="inferred from homology"/>
<name>MOAC_PSEP7</name>
<protein>
    <recommendedName>
        <fullName evidence="1">Cyclic pyranopterin monophosphate synthase</fullName>
        <ecNumber evidence="1">4.6.1.17</ecNumber>
    </recommendedName>
    <alternativeName>
        <fullName evidence="1">Molybdenum cofactor biosynthesis protein C</fullName>
    </alternativeName>
</protein>
<gene>
    <name evidence="1" type="primary">moaC</name>
    <name type="ordered locus">PSPA7_1190</name>
</gene>
<evidence type="ECO:0000255" key="1">
    <source>
        <dbReference type="HAMAP-Rule" id="MF_01224"/>
    </source>
</evidence>